<protein>
    <recommendedName>
        <fullName evidence="1">Argininosuccinate lyase</fullName>
        <shortName evidence="1">ASAL</shortName>
        <ecNumber evidence="1">4.3.2.1</ecNumber>
    </recommendedName>
    <alternativeName>
        <fullName evidence="1">Arginosuccinase</fullName>
    </alternativeName>
</protein>
<name>ARLY_METMJ</name>
<comment type="catalytic activity">
    <reaction evidence="1">
        <text>2-(N(omega)-L-arginino)succinate = fumarate + L-arginine</text>
        <dbReference type="Rhea" id="RHEA:24020"/>
        <dbReference type="ChEBI" id="CHEBI:29806"/>
        <dbReference type="ChEBI" id="CHEBI:32682"/>
        <dbReference type="ChEBI" id="CHEBI:57472"/>
        <dbReference type="EC" id="4.3.2.1"/>
    </reaction>
</comment>
<comment type="pathway">
    <text evidence="1">Amino-acid biosynthesis; L-arginine biosynthesis; L-arginine from L-ornithine and carbamoyl phosphate: step 3/3.</text>
</comment>
<comment type="subcellular location">
    <subcellularLocation>
        <location evidence="1">Cytoplasm</location>
    </subcellularLocation>
</comment>
<comment type="similarity">
    <text evidence="1">Belongs to the lyase 1 family. Argininosuccinate lyase subfamily.</text>
</comment>
<feature type="chain" id="PRO_1000000502" description="Argininosuccinate lyase">
    <location>
        <begin position="1"/>
        <end position="492"/>
    </location>
</feature>
<organism>
    <name type="scientific">Methanoculleus marisnigri (strain ATCC 35101 / DSM 1498 / JR1)</name>
    <dbReference type="NCBI Taxonomy" id="368407"/>
    <lineage>
        <taxon>Archaea</taxon>
        <taxon>Methanobacteriati</taxon>
        <taxon>Methanobacteriota</taxon>
        <taxon>Stenosarchaea group</taxon>
        <taxon>Methanomicrobia</taxon>
        <taxon>Methanomicrobiales</taxon>
        <taxon>Methanomicrobiaceae</taxon>
        <taxon>Methanoculleus</taxon>
    </lineage>
</organism>
<accession>A3CTT5</accession>
<proteinExistence type="inferred from homology"/>
<evidence type="ECO:0000255" key="1">
    <source>
        <dbReference type="HAMAP-Rule" id="MF_00006"/>
    </source>
</evidence>
<sequence>MRSDQIRQGRLAGERSGDLEHFLASMDADRWIARADLLVDMAHLLGLSRQGIIDEAPARALMAALLDLYDHGVPEEAFDERFEDVHAGKEAYLIDRVGEDFGGRLHMGRSRNDEVATCIRIRLKEEIIALLRSLVDLRATLLDVAAGHTGTVMPGFTHLQHAQPTTLAHYLLAYEQAFSRDTARLREAYARVDVSPLGSAAFASTGFPLDRAYTASLLGFSRPAGNSMDAVAARDFAIEVLADASICMTSTSRLCEELVLWSTAFVGFVRLDDAYCSSSSIMPQKKNPDVAEIMRAKAGSVAGSLAAAITITKGLPMSYNRDLQELTPHLWRGVEAARQSIPLLSGMLGSATFDAERMAAEAGRGFSTATELADVLVREYGLPFRTAHRIVGRAVRHGSLDLATLEAAAREAADFSVVELGLTREKIDAVLDPRHAVAVRNIVGGPAPEAVAAQISEQRNLLARDKAWAEETESALSGAFEHLILEARRFAA</sequence>
<reference key="1">
    <citation type="journal article" date="2009" name="Stand. Genomic Sci.">
        <title>Complete genome sequence of Methanoculleus marisnigri Romesser et al. 1981 type strain JR1.</title>
        <authorList>
            <person name="Anderson I.J."/>
            <person name="Sieprawska-Lupa M."/>
            <person name="Lapidus A."/>
            <person name="Nolan M."/>
            <person name="Copeland A."/>
            <person name="Glavina Del Rio T."/>
            <person name="Tice H."/>
            <person name="Dalin E."/>
            <person name="Barry K."/>
            <person name="Saunders E."/>
            <person name="Han C."/>
            <person name="Brettin T."/>
            <person name="Detter J.C."/>
            <person name="Bruce D."/>
            <person name="Mikhailova N."/>
            <person name="Pitluck S."/>
            <person name="Hauser L."/>
            <person name="Land M."/>
            <person name="Lucas S."/>
            <person name="Richardson P."/>
            <person name="Whitman W.B."/>
            <person name="Kyrpides N.C."/>
        </authorList>
    </citation>
    <scope>NUCLEOTIDE SEQUENCE [LARGE SCALE GENOMIC DNA]</scope>
    <source>
        <strain>ATCC 35101 / DSM 1498 / JR1</strain>
    </source>
</reference>
<keyword id="KW-0028">Amino-acid biosynthesis</keyword>
<keyword id="KW-0055">Arginine biosynthesis</keyword>
<keyword id="KW-0963">Cytoplasm</keyword>
<keyword id="KW-0456">Lyase</keyword>
<dbReference type="EC" id="4.3.2.1" evidence="1"/>
<dbReference type="EMBL" id="CP000562">
    <property type="protein sequence ID" value="ABN56785.1"/>
    <property type="molecule type" value="Genomic_DNA"/>
</dbReference>
<dbReference type="RefSeq" id="WP_011843696.1">
    <property type="nucleotide sequence ID" value="NC_009051.1"/>
</dbReference>
<dbReference type="SMR" id="A3CTT5"/>
<dbReference type="STRING" id="368407.Memar_0852"/>
<dbReference type="GeneID" id="4847711"/>
<dbReference type="GeneID" id="76731421"/>
<dbReference type="KEGG" id="mem:Memar_0852"/>
<dbReference type="eggNOG" id="arCOG01748">
    <property type="taxonomic scope" value="Archaea"/>
</dbReference>
<dbReference type="HOGENOM" id="CLU_027272_2_3_2"/>
<dbReference type="OrthoDB" id="27337at2157"/>
<dbReference type="UniPathway" id="UPA00068">
    <property type="reaction ID" value="UER00114"/>
</dbReference>
<dbReference type="Proteomes" id="UP000002146">
    <property type="component" value="Chromosome"/>
</dbReference>
<dbReference type="GO" id="GO:0005829">
    <property type="term" value="C:cytosol"/>
    <property type="evidence" value="ECO:0007669"/>
    <property type="project" value="TreeGrafter"/>
</dbReference>
<dbReference type="GO" id="GO:0004056">
    <property type="term" value="F:argininosuccinate lyase activity"/>
    <property type="evidence" value="ECO:0007669"/>
    <property type="project" value="UniProtKB-UniRule"/>
</dbReference>
<dbReference type="GO" id="GO:0042450">
    <property type="term" value="P:arginine biosynthetic process via ornithine"/>
    <property type="evidence" value="ECO:0007669"/>
    <property type="project" value="InterPro"/>
</dbReference>
<dbReference type="GO" id="GO:0006526">
    <property type="term" value="P:L-arginine biosynthetic process"/>
    <property type="evidence" value="ECO:0007669"/>
    <property type="project" value="UniProtKB-UniRule"/>
</dbReference>
<dbReference type="CDD" id="cd01359">
    <property type="entry name" value="Argininosuccinate_lyase"/>
    <property type="match status" value="1"/>
</dbReference>
<dbReference type="FunFam" id="1.20.200.10:FF:000015">
    <property type="entry name" value="argininosuccinate lyase isoform X2"/>
    <property type="match status" value="1"/>
</dbReference>
<dbReference type="Gene3D" id="1.10.40.30">
    <property type="entry name" value="Fumarase/aspartase (C-terminal domain)"/>
    <property type="match status" value="1"/>
</dbReference>
<dbReference type="Gene3D" id="1.20.200.10">
    <property type="entry name" value="Fumarase/aspartase (Central domain)"/>
    <property type="match status" value="1"/>
</dbReference>
<dbReference type="Gene3D" id="1.10.275.10">
    <property type="entry name" value="Fumarase/aspartase (N-terminal domain)"/>
    <property type="match status" value="1"/>
</dbReference>
<dbReference type="HAMAP" id="MF_00006">
    <property type="entry name" value="Arg_succ_lyase"/>
    <property type="match status" value="1"/>
</dbReference>
<dbReference type="InterPro" id="IPR029419">
    <property type="entry name" value="Arg_succ_lyase_C"/>
</dbReference>
<dbReference type="InterPro" id="IPR009049">
    <property type="entry name" value="Argininosuccinate_lyase"/>
</dbReference>
<dbReference type="InterPro" id="IPR024083">
    <property type="entry name" value="Fumarase/histidase_N"/>
</dbReference>
<dbReference type="InterPro" id="IPR000362">
    <property type="entry name" value="Fumarate_lyase_fam"/>
</dbReference>
<dbReference type="InterPro" id="IPR022761">
    <property type="entry name" value="Fumarate_lyase_N"/>
</dbReference>
<dbReference type="InterPro" id="IPR008948">
    <property type="entry name" value="L-Aspartase-like"/>
</dbReference>
<dbReference type="NCBIfam" id="TIGR00838">
    <property type="entry name" value="argH"/>
    <property type="match status" value="1"/>
</dbReference>
<dbReference type="PANTHER" id="PTHR43814">
    <property type="entry name" value="ARGININOSUCCINATE LYASE"/>
    <property type="match status" value="1"/>
</dbReference>
<dbReference type="PANTHER" id="PTHR43814:SF1">
    <property type="entry name" value="ARGININOSUCCINATE LYASE"/>
    <property type="match status" value="1"/>
</dbReference>
<dbReference type="Pfam" id="PF14698">
    <property type="entry name" value="ASL_C2"/>
    <property type="match status" value="1"/>
</dbReference>
<dbReference type="Pfam" id="PF00206">
    <property type="entry name" value="Lyase_1"/>
    <property type="match status" value="1"/>
</dbReference>
<dbReference type="PRINTS" id="PR00145">
    <property type="entry name" value="ARGSUCLYASE"/>
</dbReference>
<dbReference type="PRINTS" id="PR00149">
    <property type="entry name" value="FUMRATELYASE"/>
</dbReference>
<dbReference type="SUPFAM" id="SSF48557">
    <property type="entry name" value="L-aspartase-like"/>
    <property type="match status" value="1"/>
</dbReference>
<gene>
    <name evidence="1" type="primary">argH</name>
    <name type="ordered locus">Memar_0852</name>
</gene>